<name>NUOD_MYCSS</name>
<accession>Q1BBP6</accession>
<feature type="chain" id="PRO_0000357861" description="NADH-quinone oxidoreductase subunit D">
    <location>
        <begin position="1"/>
        <end position="446"/>
    </location>
</feature>
<proteinExistence type="inferred from homology"/>
<evidence type="ECO:0000255" key="1">
    <source>
        <dbReference type="HAMAP-Rule" id="MF_01358"/>
    </source>
</evidence>
<comment type="function">
    <text evidence="1">NDH-1 shuttles electrons from NADH, via FMN and iron-sulfur (Fe-S) centers, to quinones in the respiratory chain. The immediate electron acceptor for the enzyme in this species is believed to be a menaquinone. Couples the redox reaction to proton translocation (for every two electrons transferred, four hydrogen ions are translocated across the cytoplasmic membrane), and thus conserves the redox energy in a proton gradient.</text>
</comment>
<comment type="catalytic activity">
    <reaction evidence="1">
        <text>a quinone + NADH + 5 H(+)(in) = a quinol + NAD(+) + 4 H(+)(out)</text>
        <dbReference type="Rhea" id="RHEA:57888"/>
        <dbReference type="ChEBI" id="CHEBI:15378"/>
        <dbReference type="ChEBI" id="CHEBI:24646"/>
        <dbReference type="ChEBI" id="CHEBI:57540"/>
        <dbReference type="ChEBI" id="CHEBI:57945"/>
        <dbReference type="ChEBI" id="CHEBI:132124"/>
    </reaction>
</comment>
<comment type="subunit">
    <text evidence="1">NDH-1 is composed of 14 different subunits. Subunits NuoB, C, D, E, F, and G constitute the peripheral sector of the complex.</text>
</comment>
<comment type="subcellular location">
    <subcellularLocation>
        <location evidence="1">Cell membrane</location>
        <topology evidence="1">Peripheral membrane protein</topology>
        <orientation evidence="1">Cytoplasmic side</orientation>
    </subcellularLocation>
</comment>
<comment type="similarity">
    <text evidence="1">Belongs to the complex I 49 kDa subunit family.</text>
</comment>
<sequence>MTTPPGPPNAGGDARTGTDTVIVVGGEDWEQVVAAAEQAQAGERIVVNMGPQHPSTHGVLRLILEIEGETITEARCGIGYLHTGIEKNLEYRNWTQGVTFVTRMDYLSPFFNETAYCLGVEKLLGVTDAIPERVNVIRVMLMELNRISSHLVALATGGMELGAMSAMFYGFREREEILSVFEMITGLRMNHAYIRPGGLAADLPDGAVPRIRELLALLPGRLRDLENLLNENYIWKARTQGIGYLDLAGCMALGITGPVLRSTGLPHDLRRAQPYCGYEDYEFDVITDDGCDAYGRYLIRVKEMRESLKIVEQCVDRLKPGPVMIADKKLAWPADLELGPDGLGNSPAHIARIMGQSMEGLIHHFKLVTEGIRVPAGQVYTAVESPRGELGVHMVSDGGTRPYRVHYRDPSFTNLQAVAAMCEGGMVADAISAVASIDPVMGGVDR</sequence>
<protein>
    <recommendedName>
        <fullName evidence="1">NADH-quinone oxidoreductase subunit D</fullName>
        <ecNumber evidence="1">7.1.1.-</ecNumber>
    </recommendedName>
    <alternativeName>
        <fullName evidence="1">NADH dehydrogenase I subunit D</fullName>
    </alternativeName>
    <alternativeName>
        <fullName evidence="1">NDH-1 subunit D</fullName>
    </alternativeName>
</protein>
<organism>
    <name type="scientific">Mycobacterium sp. (strain MCS)</name>
    <dbReference type="NCBI Taxonomy" id="164756"/>
    <lineage>
        <taxon>Bacteria</taxon>
        <taxon>Bacillati</taxon>
        <taxon>Actinomycetota</taxon>
        <taxon>Actinomycetes</taxon>
        <taxon>Mycobacteriales</taxon>
        <taxon>Mycobacteriaceae</taxon>
        <taxon>Mycobacterium</taxon>
    </lineage>
</organism>
<reference key="1">
    <citation type="submission" date="2006-06" db="EMBL/GenBank/DDBJ databases">
        <title>Complete sequence of chromosome of Mycobacterium sp. MCS.</title>
        <authorList>
            <consortium name="US DOE Joint Genome Institute"/>
            <person name="Copeland A."/>
            <person name="Lucas S."/>
            <person name="Lapidus A."/>
            <person name="Barry K."/>
            <person name="Detter J.C."/>
            <person name="Glavina del Rio T."/>
            <person name="Hammon N."/>
            <person name="Israni S."/>
            <person name="Dalin E."/>
            <person name="Tice H."/>
            <person name="Pitluck S."/>
            <person name="Martinez M."/>
            <person name="Schmutz J."/>
            <person name="Larimer F."/>
            <person name="Land M."/>
            <person name="Hauser L."/>
            <person name="Kyrpides N."/>
            <person name="Kim E."/>
            <person name="Miller C.D."/>
            <person name="Hughes J.E."/>
            <person name="Anderson A.J."/>
            <person name="Sims R.C."/>
            <person name="Richardson P."/>
        </authorList>
    </citation>
    <scope>NUCLEOTIDE SEQUENCE [LARGE SCALE GENOMIC DNA]</scope>
    <source>
        <strain>MCS</strain>
    </source>
</reference>
<dbReference type="EC" id="7.1.1.-" evidence="1"/>
<dbReference type="EMBL" id="CP000384">
    <property type="protein sequence ID" value="ABG07688.1"/>
    <property type="molecule type" value="Genomic_DNA"/>
</dbReference>
<dbReference type="SMR" id="Q1BBP6"/>
<dbReference type="KEGG" id="mmc:Mmcs_1577"/>
<dbReference type="HOGENOM" id="CLU_015134_1_2_11"/>
<dbReference type="BioCyc" id="MSP164756:G1G6O-1614-MONOMER"/>
<dbReference type="GO" id="GO:0005886">
    <property type="term" value="C:plasma membrane"/>
    <property type="evidence" value="ECO:0007669"/>
    <property type="project" value="UniProtKB-SubCell"/>
</dbReference>
<dbReference type="GO" id="GO:0051287">
    <property type="term" value="F:NAD binding"/>
    <property type="evidence" value="ECO:0007669"/>
    <property type="project" value="InterPro"/>
</dbReference>
<dbReference type="GO" id="GO:0050136">
    <property type="term" value="F:NADH:ubiquinone reductase (non-electrogenic) activity"/>
    <property type="evidence" value="ECO:0007669"/>
    <property type="project" value="UniProtKB-UniRule"/>
</dbReference>
<dbReference type="GO" id="GO:0048038">
    <property type="term" value="F:quinone binding"/>
    <property type="evidence" value="ECO:0007669"/>
    <property type="project" value="UniProtKB-KW"/>
</dbReference>
<dbReference type="Gene3D" id="1.10.645.10">
    <property type="entry name" value="Cytochrome-c3 Hydrogenase, chain B"/>
    <property type="match status" value="1"/>
</dbReference>
<dbReference type="HAMAP" id="MF_01358">
    <property type="entry name" value="NDH1_NuoD"/>
    <property type="match status" value="1"/>
</dbReference>
<dbReference type="InterPro" id="IPR001135">
    <property type="entry name" value="NADH_Q_OxRdtase_suD"/>
</dbReference>
<dbReference type="InterPro" id="IPR014029">
    <property type="entry name" value="NADH_UbQ_OxRdtase_49kDa_CS"/>
</dbReference>
<dbReference type="InterPro" id="IPR022885">
    <property type="entry name" value="NDH1_su_D/H"/>
</dbReference>
<dbReference type="InterPro" id="IPR029014">
    <property type="entry name" value="NiFe-Hase_large"/>
</dbReference>
<dbReference type="NCBIfam" id="TIGR01962">
    <property type="entry name" value="NuoD"/>
    <property type="match status" value="1"/>
</dbReference>
<dbReference type="NCBIfam" id="NF004739">
    <property type="entry name" value="PRK06075.1"/>
    <property type="match status" value="1"/>
</dbReference>
<dbReference type="PANTHER" id="PTHR11993:SF10">
    <property type="entry name" value="NADH DEHYDROGENASE [UBIQUINONE] IRON-SULFUR PROTEIN 2, MITOCHONDRIAL"/>
    <property type="match status" value="1"/>
</dbReference>
<dbReference type="PANTHER" id="PTHR11993">
    <property type="entry name" value="NADH-UBIQUINONE OXIDOREDUCTASE 49 KDA SUBUNIT"/>
    <property type="match status" value="1"/>
</dbReference>
<dbReference type="Pfam" id="PF00346">
    <property type="entry name" value="Complex1_49kDa"/>
    <property type="match status" value="1"/>
</dbReference>
<dbReference type="SUPFAM" id="SSF56762">
    <property type="entry name" value="HydB/Nqo4-like"/>
    <property type="match status" value="1"/>
</dbReference>
<dbReference type="PROSITE" id="PS00535">
    <property type="entry name" value="COMPLEX1_49K"/>
    <property type="match status" value="1"/>
</dbReference>
<gene>
    <name evidence="1" type="primary">nuoD</name>
    <name type="ordered locus">Mmcs_1577</name>
</gene>
<keyword id="KW-1003">Cell membrane</keyword>
<keyword id="KW-0472">Membrane</keyword>
<keyword id="KW-0520">NAD</keyword>
<keyword id="KW-0874">Quinone</keyword>
<keyword id="KW-1278">Translocase</keyword>
<keyword id="KW-0813">Transport</keyword>